<gene>
    <name type="primary">MYLK</name>
</gene>
<evidence type="ECO:0000250" key="1"/>
<evidence type="ECO:0000250" key="2">
    <source>
        <dbReference type="UniProtKB" id="Q15746"/>
    </source>
</evidence>
<evidence type="ECO:0000250" key="3">
    <source>
        <dbReference type="UniProtKB" id="Q6PDN3"/>
    </source>
</evidence>
<evidence type="ECO:0000255" key="4">
    <source>
        <dbReference type="PROSITE-ProRule" id="PRU00114"/>
    </source>
</evidence>
<evidence type="ECO:0000255" key="5">
    <source>
        <dbReference type="PROSITE-ProRule" id="PRU00159"/>
    </source>
</evidence>
<evidence type="ECO:0000255" key="6">
    <source>
        <dbReference type="PROSITE-ProRule" id="PRU00316"/>
    </source>
</evidence>
<evidence type="ECO:0000255" key="7">
    <source>
        <dbReference type="PROSITE-ProRule" id="PRU10027"/>
    </source>
</evidence>
<evidence type="ECO:0000256" key="8">
    <source>
        <dbReference type="SAM" id="MobiDB-lite"/>
    </source>
</evidence>
<evidence type="ECO:0000269" key="9">
    <source>
    </source>
</evidence>
<evidence type="ECO:0000305" key="10"/>
<dbReference type="EC" id="2.7.11.18"/>
<dbReference type="EMBL" id="S57131">
    <property type="protein sequence ID" value="AAB25794.1"/>
    <property type="molecule type" value="mRNA"/>
</dbReference>
<dbReference type="PIR" id="JN0583">
    <property type="entry name" value="JN0583"/>
</dbReference>
<dbReference type="RefSeq" id="NP_788809.1">
    <molecule id="Q28824-1"/>
    <property type="nucleotide sequence ID" value="NM_176636.3"/>
</dbReference>
<dbReference type="SMR" id="Q28824"/>
<dbReference type="FunCoup" id="Q28824">
    <property type="interactions" value="246"/>
</dbReference>
<dbReference type="STRING" id="9913.ENSBTAP00000059804"/>
<dbReference type="PaxDb" id="9913-ENSBTAP00000019385"/>
<dbReference type="PeptideAtlas" id="Q28824"/>
<dbReference type="GeneID" id="338037"/>
<dbReference type="KEGG" id="bta:338037"/>
<dbReference type="CTD" id="4638"/>
<dbReference type="VEuPathDB" id="HostDB:ENSBTAG00000014567"/>
<dbReference type="eggNOG" id="KOG0613">
    <property type="taxonomic scope" value="Eukaryota"/>
</dbReference>
<dbReference type="InParanoid" id="Q28824"/>
<dbReference type="OMA" id="NCQVSLM"/>
<dbReference type="OrthoDB" id="2152335at2759"/>
<dbReference type="BRENDA" id="2.7.11.18">
    <property type="organism ID" value="908"/>
</dbReference>
<dbReference type="Reactome" id="R-BTA-445355">
    <property type="pathway name" value="Smooth Muscle Contraction"/>
</dbReference>
<dbReference type="Reactome" id="R-BTA-5627123">
    <property type="pathway name" value="RHO GTPases activate PAKs"/>
</dbReference>
<dbReference type="Proteomes" id="UP000009136">
    <property type="component" value="Chromosome 1"/>
</dbReference>
<dbReference type="Bgee" id="ENSBTAG00000014567">
    <property type="expression patterns" value="Expressed in myometrium and 107 other cell types or tissues"/>
</dbReference>
<dbReference type="GO" id="GO:0032154">
    <property type="term" value="C:cleavage furrow"/>
    <property type="evidence" value="ECO:0000318"/>
    <property type="project" value="GO_Central"/>
</dbReference>
<dbReference type="GO" id="GO:0005737">
    <property type="term" value="C:cytoplasm"/>
    <property type="evidence" value="ECO:0000318"/>
    <property type="project" value="GO_Central"/>
</dbReference>
<dbReference type="GO" id="GO:0030027">
    <property type="term" value="C:lamellipodium"/>
    <property type="evidence" value="ECO:0000318"/>
    <property type="project" value="GO_Central"/>
</dbReference>
<dbReference type="GO" id="GO:0001725">
    <property type="term" value="C:stress fiber"/>
    <property type="evidence" value="ECO:0000318"/>
    <property type="project" value="GO_Central"/>
</dbReference>
<dbReference type="GO" id="GO:0003779">
    <property type="term" value="F:actin binding"/>
    <property type="evidence" value="ECO:0007669"/>
    <property type="project" value="UniProtKB-KW"/>
</dbReference>
<dbReference type="GO" id="GO:0005524">
    <property type="term" value="F:ATP binding"/>
    <property type="evidence" value="ECO:0007669"/>
    <property type="project" value="UniProtKB-KW"/>
</dbReference>
<dbReference type="GO" id="GO:0005516">
    <property type="term" value="F:calmodulin binding"/>
    <property type="evidence" value="ECO:0007669"/>
    <property type="project" value="UniProtKB-KW"/>
</dbReference>
<dbReference type="GO" id="GO:0046872">
    <property type="term" value="F:metal ion binding"/>
    <property type="evidence" value="ECO:0007669"/>
    <property type="project" value="UniProtKB-KW"/>
</dbReference>
<dbReference type="GO" id="GO:0004687">
    <property type="term" value="F:myosin light chain kinase activity"/>
    <property type="evidence" value="ECO:0000318"/>
    <property type="project" value="GO_Central"/>
</dbReference>
<dbReference type="GO" id="GO:0014820">
    <property type="term" value="P:tonic smooth muscle contraction"/>
    <property type="evidence" value="ECO:0000318"/>
    <property type="project" value="GO_Central"/>
</dbReference>
<dbReference type="CDD" id="cd00063">
    <property type="entry name" value="FN3"/>
    <property type="match status" value="1"/>
</dbReference>
<dbReference type="CDD" id="cd05762">
    <property type="entry name" value="IgI_8_hMLCK_like"/>
    <property type="match status" value="1"/>
</dbReference>
<dbReference type="CDD" id="cd20973">
    <property type="entry name" value="IgI_telokin-like"/>
    <property type="match status" value="1"/>
</dbReference>
<dbReference type="CDD" id="cd14191">
    <property type="entry name" value="STKc_MLCK1"/>
    <property type="match status" value="1"/>
</dbReference>
<dbReference type="FunFam" id="1.10.510.10:FF:000175">
    <property type="entry name" value="Myosin light chain kinase, smooth muscle"/>
    <property type="match status" value="1"/>
</dbReference>
<dbReference type="FunFam" id="2.60.40.10:FF:000080">
    <property type="entry name" value="Myosin light chain kinase, smooth muscle"/>
    <property type="match status" value="1"/>
</dbReference>
<dbReference type="FunFam" id="2.60.40.10:FF:000297">
    <property type="entry name" value="Myosin light chain kinase, smooth muscle"/>
    <property type="match status" value="1"/>
</dbReference>
<dbReference type="FunFam" id="2.60.40.10:FF:000580">
    <property type="entry name" value="Myosin light chain kinase, smooth muscle"/>
    <property type="match status" value="1"/>
</dbReference>
<dbReference type="FunFam" id="2.60.40.10:FF:000785">
    <property type="entry name" value="Myosin light chain kinase, smooth muscle"/>
    <property type="match status" value="1"/>
</dbReference>
<dbReference type="FunFam" id="3.30.200.20:FF:000198">
    <property type="entry name" value="Myosin light chain kinase, smooth muscle"/>
    <property type="match status" value="1"/>
</dbReference>
<dbReference type="Gene3D" id="2.60.40.10">
    <property type="entry name" value="Immunoglobulins"/>
    <property type="match status" value="4"/>
</dbReference>
<dbReference type="Gene3D" id="3.30.200.20">
    <property type="entry name" value="Phosphorylase Kinase, domain 1"/>
    <property type="match status" value="1"/>
</dbReference>
<dbReference type="Gene3D" id="1.10.510.10">
    <property type="entry name" value="Transferase(Phosphotransferase) domain 1"/>
    <property type="match status" value="1"/>
</dbReference>
<dbReference type="InterPro" id="IPR003961">
    <property type="entry name" value="FN3_dom"/>
</dbReference>
<dbReference type="InterPro" id="IPR036116">
    <property type="entry name" value="FN3_sf"/>
</dbReference>
<dbReference type="InterPro" id="IPR007110">
    <property type="entry name" value="Ig-like_dom"/>
</dbReference>
<dbReference type="InterPro" id="IPR036179">
    <property type="entry name" value="Ig-like_dom_sf"/>
</dbReference>
<dbReference type="InterPro" id="IPR013783">
    <property type="entry name" value="Ig-like_fold"/>
</dbReference>
<dbReference type="InterPro" id="IPR013098">
    <property type="entry name" value="Ig_I-set"/>
</dbReference>
<dbReference type="InterPro" id="IPR003599">
    <property type="entry name" value="Ig_sub"/>
</dbReference>
<dbReference type="InterPro" id="IPR003598">
    <property type="entry name" value="Ig_sub2"/>
</dbReference>
<dbReference type="InterPro" id="IPR011009">
    <property type="entry name" value="Kinase-like_dom_sf"/>
</dbReference>
<dbReference type="InterPro" id="IPR015725">
    <property type="entry name" value="MLCK1_kinase_dom"/>
</dbReference>
<dbReference type="InterPro" id="IPR000719">
    <property type="entry name" value="Prot_kinase_dom"/>
</dbReference>
<dbReference type="InterPro" id="IPR017441">
    <property type="entry name" value="Protein_kinase_ATP_BS"/>
</dbReference>
<dbReference type="InterPro" id="IPR008271">
    <property type="entry name" value="Ser/Thr_kinase_AS"/>
</dbReference>
<dbReference type="PANTHER" id="PTHR47633">
    <property type="entry name" value="IMMUNOGLOBULIN"/>
    <property type="match status" value="1"/>
</dbReference>
<dbReference type="PANTHER" id="PTHR47633:SF1">
    <property type="entry name" value="MYOSIN LIGHT CHAIN KINASE, SMOOTH MUSCLE"/>
    <property type="match status" value="1"/>
</dbReference>
<dbReference type="Pfam" id="PF00041">
    <property type="entry name" value="fn3"/>
    <property type="match status" value="1"/>
</dbReference>
<dbReference type="Pfam" id="PF07679">
    <property type="entry name" value="I-set"/>
    <property type="match status" value="3"/>
</dbReference>
<dbReference type="Pfam" id="PF00069">
    <property type="entry name" value="Pkinase"/>
    <property type="match status" value="1"/>
</dbReference>
<dbReference type="SMART" id="SM00060">
    <property type="entry name" value="FN3"/>
    <property type="match status" value="1"/>
</dbReference>
<dbReference type="SMART" id="SM00409">
    <property type="entry name" value="IG"/>
    <property type="match status" value="3"/>
</dbReference>
<dbReference type="SMART" id="SM00408">
    <property type="entry name" value="IGc2"/>
    <property type="match status" value="3"/>
</dbReference>
<dbReference type="SMART" id="SM00220">
    <property type="entry name" value="S_TKc"/>
    <property type="match status" value="1"/>
</dbReference>
<dbReference type="SUPFAM" id="SSF49265">
    <property type="entry name" value="Fibronectin type III"/>
    <property type="match status" value="1"/>
</dbReference>
<dbReference type="SUPFAM" id="SSF48726">
    <property type="entry name" value="Immunoglobulin"/>
    <property type="match status" value="3"/>
</dbReference>
<dbReference type="SUPFAM" id="SSF56112">
    <property type="entry name" value="Protein kinase-like (PK-like)"/>
    <property type="match status" value="1"/>
</dbReference>
<dbReference type="PROSITE" id="PS50853">
    <property type="entry name" value="FN3"/>
    <property type="match status" value="1"/>
</dbReference>
<dbReference type="PROSITE" id="PS50835">
    <property type="entry name" value="IG_LIKE"/>
    <property type="match status" value="3"/>
</dbReference>
<dbReference type="PROSITE" id="PS00107">
    <property type="entry name" value="PROTEIN_KINASE_ATP"/>
    <property type="match status" value="1"/>
</dbReference>
<dbReference type="PROSITE" id="PS50011">
    <property type="entry name" value="PROTEIN_KINASE_DOM"/>
    <property type="match status" value="1"/>
</dbReference>
<dbReference type="PROSITE" id="PS00108">
    <property type="entry name" value="PROTEIN_KINASE_ST"/>
    <property type="match status" value="1"/>
</dbReference>
<protein>
    <recommendedName>
        <fullName>Myosin light chain kinase, smooth muscle</fullName>
        <shortName>MLCK</shortName>
        <shortName>smMLCK</shortName>
        <ecNumber>2.7.11.18</ecNumber>
    </recommendedName>
    <alternativeName>
        <fullName>Telokin</fullName>
    </alternativeName>
    <component>
        <recommendedName>
            <fullName>Myosin light chain kinase, smooth muscle, deglutamylated form</fullName>
        </recommendedName>
    </component>
</protein>
<feature type="chain" id="PRO_0000024352" description="Myosin light chain kinase, smooth muscle">
    <location>
        <begin position="1"/>
        <end position="1176"/>
    </location>
</feature>
<feature type="chain" id="PRO_0000403730" description="Myosin light chain kinase, smooth muscle, deglutamylated form" evidence="1">
    <location>
        <begin position="1"/>
        <end position="1171"/>
    </location>
</feature>
<feature type="repeat" description="1">
    <location>
        <begin position="100"/>
        <end position="111"/>
    </location>
</feature>
<feature type="repeat" description="2">
    <location>
        <begin position="112"/>
        <end position="123"/>
    </location>
</feature>
<feature type="repeat" description="3">
    <location>
        <begin position="124"/>
        <end position="135"/>
    </location>
</feature>
<feature type="repeat" description="4">
    <location>
        <begin position="136"/>
        <end position="147"/>
    </location>
</feature>
<feature type="repeat" description="5">
    <location>
        <begin position="148"/>
        <end position="159"/>
    </location>
</feature>
<feature type="repeat" description="6">
    <location>
        <begin position="160"/>
        <end position="171"/>
    </location>
</feature>
<feature type="repeat" description="7">
    <location>
        <begin position="172"/>
        <end position="183"/>
    </location>
</feature>
<feature type="repeat" description="8">
    <location>
        <begin position="184"/>
        <end position="195"/>
    </location>
</feature>
<feature type="repeat" description="9">
    <location>
        <begin position="196"/>
        <end position="207"/>
    </location>
</feature>
<feature type="repeat" description="10">
    <location>
        <begin position="208"/>
        <end position="219"/>
    </location>
</feature>
<feature type="repeat" description="11">
    <location>
        <begin position="220"/>
        <end position="231"/>
    </location>
</feature>
<feature type="repeat" description="12">
    <location>
        <begin position="232"/>
        <end position="243"/>
    </location>
</feature>
<feature type="repeat" description="13">
    <location>
        <begin position="244"/>
        <end position="255"/>
    </location>
</feature>
<feature type="repeat" description="14">
    <location>
        <begin position="256"/>
        <end position="267"/>
    </location>
</feature>
<feature type="repeat" description="15">
    <location>
        <begin position="268"/>
        <end position="279"/>
    </location>
</feature>
<feature type="repeat" description="16">
    <location>
        <begin position="280"/>
        <end position="291"/>
    </location>
</feature>
<feature type="domain" description="Ig-like C2-type 1">
    <location>
        <begin position="356"/>
        <end position="444"/>
    </location>
</feature>
<feature type="domain" description="Ig-like C2-type 2">
    <location>
        <begin position="498"/>
        <end position="586"/>
    </location>
</feature>
<feature type="domain" description="Fibronectin type-III" evidence="6">
    <location>
        <begin position="594"/>
        <end position="686"/>
    </location>
</feature>
<feature type="domain" description="Protein kinase" evidence="5">
    <location>
        <begin position="725"/>
        <end position="980"/>
    </location>
</feature>
<feature type="domain" description="Ig-like C2-type 3">
    <location>
        <begin position="1069"/>
        <end position="1158"/>
    </location>
</feature>
<feature type="region of interest" description="Disordered" evidence="8">
    <location>
        <begin position="1"/>
        <end position="354"/>
    </location>
</feature>
<feature type="region of interest" description="Actin-binding (calcium/calmodulin-sensitive)">
    <location>
        <begin position="1"/>
        <end position="41"/>
    </location>
</feature>
<feature type="region of interest" description="Calmodulin-binding">
    <location>
        <begin position="26"/>
        <end position="41"/>
    </location>
</feature>
<feature type="region of interest" description="16 X 12 AA tandem repeats">
    <location>
        <begin position="100"/>
        <end position="291"/>
    </location>
</feature>
<feature type="region of interest" description="Actin-binding (calcium/calmodulin-insensitive)">
    <location>
        <begin position="319"/>
        <end position="721"/>
    </location>
</feature>
<feature type="region of interest" description="Disordered" evidence="8">
    <location>
        <begin position="448"/>
        <end position="497"/>
    </location>
</feature>
<feature type="region of interest" description="Disordered" evidence="8">
    <location>
        <begin position="673"/>
        <end position="707"/>
    </location>
</feature>
<feature type="region of interest" description="Calmodulin-binding">
    <location>
        <begin position="972"/>
        <end position="1035"/>
    </location>
</feature>
<feature type="compositionally biased region" description="Pro residues" evidence="8">
    <location>
        <begin position="43"/>
        <end position="55"/>
    </location>
</feature>
<feature type="compositionally biased region" description="Basic and acidic residues" evidence="8">
    <location>
        <begin position="320"/>
        <end position="335"/>
    </location>
</feature>
<feature type="compositionally biased region" description="Acidic residues" evidence="8">
    <location>
        <begin position="688"/>
        <end position="706"/>
    </location>
</feature>
<feature type="active site" description="Proton acceptor" evidence="5 7">
    <location>
        <position position="846"/>
    </location>
</feature>
<feature type="binding site" evidence="5">
    <location>
        <begin position="731"/>
        <end position="739"/>
    </location>
    <ligand>
        <name>ATP</name>
        <dbReference type="ChEBI" id="CHEBI:30616"/>
    </ligand>
</feature>
<feature type="binding site" evidence="5">
    <location>
        <position position="754"/>
    </location>
    <ligand>
        <name>ATP</name>
        <dbReference type="ChEBI" id="CHEBI:30616"/>
    </ligand>
</feature>
<feature type="modified residue" description="Phosphoserine" evidence="3">
    <location>
        <position position="202"/>
    </location>
</feature>
<feature type="modified residue" description="Phosphoserine" evidence="2">
    <location>
        <position position="699"/>
    </location>
</feature>
<feature type="modified residue" description="Phosphotyrosine; by ABL1" evidence="2">
    <location>
        <position position="710"/>
    </location>
</feature>
<feature type="modified residue" description="Phosphotyrosine; by ABL1" evidence="2">
    <location>
        <position position="836"/>
    </location>
</feature>
<feature type="modified residue" description="Phosphotyrosine; by ABL1" evidence="2">
    <location>
        <position position="896"/>
    </location>
</feature>
<feature type="modified residue" description="Phosphoserine" evidence="3">
    <location>
        <position position="1020"/>
    </location>
</feature>
<feature type="modified residue" description="Phosphoserine" evidence="3">
    <location>
        <position position="1021"/>
    </location>
</feature>
<feature type="modified residue" description="Phosphoserine" evidence="2">
    <location>
        <position position="1033"/>
    </location>
</feature>
<feature type="modified residue" description="Phosphoserine" evidence="3">
    <location>
        <position position="1034"/>
    </location>
</feature>
<feature type="modified residue" description="Phosphoserine" evidence="2">
    <location>
        <position position="1037"/>
    </location>
</feature>
<feature type="modified residue" description="Phosphothreonine" evidence="3">
    <location>
        <position position="1039"/>
    </location>
</feature>
<feature type="modified residue" description="Phosphoserine" evidence="2">
    <location>
        <position position="1040"/>
    </location>
</feature>
<feature type="disulfide bond" evidence="4">
    <location>
        <begin position="377"/>
        <end position="428"/>
    </location>
</feature>
<feature type="disulfide bond" evidence="4">
    <location>
        <begin position="1090"/>
        <end position="1142"/>
    </location>
</feature>
<feature type="splice variant" id="VSP_018844" description="In isoform Telokin." evidence="10">
    <location>
        <begin position="1"/>
        <end position="1021"/>
    </location>
</feature>
<keyword id="KW-0009">Actin-binding</keyword>
<keyword id="KW-0877">Alternative promoter usage</keyword>
<keyword id="KW-0067">ATP-binding</keyword>
<keyword id="KW-0106">Calcium</keyword>
<keyword id="KW-0112">Calmodulin-binding</keyword>
<keyword id="KW-0966">Cell projection</keyword>
<keyword id="KW-0963">Cytoplasm</keyword>
<keyword id="KW-0206">Cytoskeleton</keyword>
<keyword id="KW-1015">Disulfide bond</keyword>
<keyword id="KW-0393">Immunoglobulin domain</keyword>
<keyword id="KW-0418">Kinase</keyword>
<keyword id="KW-0460">Magnesium</keyword>
<keyword id="KW-0479">Metal-binding</keyword>
<keyword id="KW-0547">Nucleotide-binding</keyword>
<keyword id="KW-0597">Phosphoprotein</keyword>
<keyword id="KW-1185">Reference proteome</keyword>
<keyword id="KW-0677">Repeat</keyword>
<keyword id="KW-0723">Serine/threonine-protein kinase</keyword>
<keyword id="KW-0808">Transferase</keyword>
<proteinExistence type="evidence at protein level"/>
<accession>Q28824</accession>
<comment type="function">
    <text evidence="1 9">Calcium/calmodulin-dependent myosin light chain kinase implicated in smooth muscle contraction via phosphorylation of myosin light chains (MLC). Also regulates actin-myosin interaction through a non-kinase activity. Phosphorylates PTK2B/PYK2 and myosin light-chains. Involved in the inflammatory response (e.g. apoptosis, vascular permeability, leukocyte diapedesis), cell motility and morphology, airway hyperreactivity and other activities relevant to asthma. Required for tonic airway smooth muscle contraction that is necessary for physiological and asthmatic airway resistance. Necessary for gastrointestinal motility. Implicated in the regulation of endothelial as well as vascular permeability, probably via the regulation of cytoskeletal rearrangements. In the nervous system it has been shown to control the growth initiation of astrocytic processes in culture and to participate in transmitter release at synapses formed between cultured sympathetic ganglion cells. Critical participant in signaling sequences that result in fibroblast apoptosis. Plays a role in the regulation of epithelial cell survival. Required for epithelial wound healing, especially during actomyosin ring contraction during purse-string wound closure. Mediates RhoA-dependent membrane blebbing. Triggers TRPC5 channel activity in a calcium-dependent signaling, by inducing its subcellular localization at the plasma membrane. Promotes cell migration (including tumor cells) and tumor metastasis. PTK2B/PYK2 activation by phosphorylation mediates ITGB2 activation and is thus essential to trigger neutrophil transmigration during acute lung injury (ALI). May regulate optic nerve head astrocyte migration. Probably involved in mitotic cytoskeletal regulation. Regulates tight junction probably by modulating ZO-1 exchange in the perijunctional actomyosin ring. Mediates burn-induced microvascular barrier injury; triggers endothelial contraction in the development of microvascular hyperpermeability by phosphorylating MLC. Essential for intestinal barrier dysfunction. Mediates Giardia spp.-mediated reduced epithelial barrier function during giardiasis intestinal infection via reorganization of cytoskeletal F-actin and tight junctional ZO-1. Necessary for hypotonicity-induced Ca(2+) entry and subsequent activation of volume-sensitive organic osmolyte/anion channels (VSOAC) in cervical cancer cells (By similarity).</text>
</comment>
<comment type="catalytic activity">
    <reaction>
        <text>L-seryl-[myosin light chain] + ATP = O-phospho-L-seryl-[myosin light chain] + ADP + H(+)</text>
        <dbReference type="Rhea" id="RHEA:22004"/>
        <dbReference type="Rhea" id="RHEA-COMP:13684"/>
        <dbReference type="Rhea" id="RHEA-COMP:13685"/>
        <dbReference type="ChEBI" id="CHEBI:15378"/>
        <dbReference type="ChEBI" id="CHEBI:29999"/>
        <dbReference type="ChEBI" id="CHEBI:30616"/>
        <dbReference type="ChEBI" id="CHEBI:83421"/>
        <dbReference type="ChEBI" id="CHEBI:456216"/>
        <dbReference type="EC" id="2.7.11.18"/>
    </reaction>
</comment>
<comment type="catalytic activity">
    <reaction>
        <text>L-threonyl-[myosin light chain] + ATP = O-phospho-L-threonyl-[myosin light chain] + ADP + H(+)</text>
        <dbReference type="Rhea" id="RHEA:53900"/>
        <dbReference type="Rhea" id="RHEA-COMP:13686"/>
        <dbReference type="Rhea" id="RHEA-COMP:13687"/>
        <dbReference type="ChEBI" id="CHEBI:15378"/>
        <dbReference type="ChEBI" id="CHEBI:30013"/>
        <dbReference type="ChEBI" id="CHEBI:30616"/>
        <dbReference type="ChEBI" id="CHEBI:61977"/>
        <dbReference type="ChEBI" id="CHEBI:456216"/>
        <dbReference type="EC" id="2.7.11.18"/>
    </reaction>
</comment>
<comment type="cofactor">
    <cofactor evidence="1">
        <name>Mg(2+)</name>
        <dbReference type="ChEBI" id="CHEBI:18420"/>
    </cofactor>
</comment>
<comment type="cofactor">
    <cofactor evidence="1">
        <name>Ca(2+)</name>
        <dbReference type="ChEBI" id="CHEBI:29108"/>
    </cofactor>
</comment>
<comment type="subunit">
    <text evidence="1">All isoforms including Telokin bind calmodulin. Interacts with SVIL (By similarity). Interacts with CTTN; this interaction is reduced during thrombin-induced endothelial cell (EC) contraction but is promoted by the barrier-protective agonist sphingosine 1-phosphate (S1P) within lamellipodia. A complex made of ABL1, CTTN and MYLK regulates cortical actin-based cytoskeletal rearrangement critical to sphingosine 1-phosphate (S1P)-mediated endothelial cell (EC) barrier enhancement. Binds to NAA10/ARD1 and PTK2B/PYK2 (By similarity).</text>
</comment>
<comment type="subcellular location">
    <subcellularLocation>
        <location evidence="2">Cytoplasm</location>
    </subcellularLocation>
    <subcellularLocation>
        <location evidence="2">Cell projection</location>
        <location evidence="2">Lamellipodium</location>
    </subcellularLocation>
    <subcellularLocation>
        <location evidence="2">Cleavage furrow</location>
    </subcellularLocation>
    <subcellularLocation>
        <location evidence="2">Cytoplasm</location>
        <location evidence="2">Cytoskeleton</location>
        <location evidence="2">Stress fiber</location>
    </subcellularLocation>
    <text evidence="2">Localized to stress fibers during interphase and to the cleavage furrow during mitosis.</text>
</comment>
<comment type="alternative products">
    <event type="alternative promoter"/>
    <isoform>
        <id>Q28824-1</id>
        <name>Smooth-muscle</name>
        <sequence type="displayed"/>
    </isoform>
    <isoform>
        <id>Q28824-3</id>
        <name>Telokin</name>
        <sequence type="described" ref="VSP_018844"/>
    </isoform>
</comment>
<comment type="PTM">
    <text evidence="1">The C-terminus is deglutamylated by AGTPBP1/CCP1, AGBL1/CCP4 and AGBL4/CCP6, leading to the formation of Myosin light chain kinase, smooth muscle, deglutamylated form. The consequences of C-terminal deglutamylation are unknown (By similarity).</text>
</comment>
<comment type="PTM">
    <text evidence="1">Can probably be down-regulated by phosphorylation. Tyrosine phosphorylation by ABL1 increases kinase activity, reverses MLCK-mediated inhibition of Arp2/3-mediated actin polymerization, and enhances CTTN-binding. Phosphorylation by SRC promotes CTTN binding (By similarity).</text>
</comment>
<comment type="miscellaneous">
    <molecule>Isoform Telokin</molecule>
    <text evidence="10">No catalytic activity.</text>
</comment>
<comment type="similarity">
    <text evidence="10">Belongs to the protein kinase superfamily. CAMK Ser/Thr protein kinase family.</text>
</comment>
<reference key="1">
    <citation type="journal article" date="1992" name="J. Biochem.">
        <title>Isolation of cDNA for bovine stomach 155 kDa protein exhibiting myosin light chain kinase activity.</title>
        <authorList>
            <person name="Kobayashi H."/>
            <person name="Inoue A."/>
            <person name="Mikawa T."/>
            <person name="Kuwayama H."/>
            <person name="Hotta Y."/>
            <person name="Masaki T."/>
            <person name="Ebashi S."/>
        </authorList>
    </citation>
    <scope>NUCLEOTIDE SEQUENCE [MRNA] (ISOFORM SMOOTH-MUSCLE)</scope>
    <source>
        <tissue>Stomach</tissue>
    </source>
</reference>
<reference key="2">
    <citation type="journal article" date="1992" name="Biochem. Biophys. Res. Commun.">
        <title>A novel regulatory effect of myosin light chain kinase from smooth muscle on the ATP-dependent interaction between actin and myosin.</title>
        <authorList>
            <person name="Kohama K."/>
            <person name="Okagaki T."/>
            <person name="Hayakawa K."/>
            <person name="Lin Y."/>
            <person name="Ishikawa R."/>
            <person name="Shimmen T."/>
            <person name="Inoue A."/>
        </authorList>
    </citation>
    <scope>FUNCTION</scope>
</reference>
<reference key="3">
    <citation type="journal article" date="1997" name="J. Biol. Chem.">
        <title>The structure and function of the actin-binding domain of myosin light chain kinase of smooth muscle.</title>
        <authorList>
            <person name="Ye L.H."/>
            <person name="Hayakawa K."/>
            <person name="Kishi H."/>
            <person name="Imamura M."/>
            <person name="Nakamura A."/>
            <person name="Okagaki T."/>
            <person name="Takagi T."/>
            <person name="Iwata A."/>
            <person name="Tanaka T."/>
            <person name="Kohama K."/>
        </authorList>
    </citation>
    <scope>ACTIN-BINDING</scope>
    <scope>CALMODULIN-BINDING</scope>
</reference>
<sequence>MDFRANLQRQVKPKTLSEEERKVHGPQQVDFRSVLAKKGTPKTPVPEKVPPPKPATPDFRSVLGSKKKLPTENGSNNTEALNAKAAEGLKPVGNAQPSGFLKPVGNAKLADTPKPLSSTKPAETPKPLGNVKPAETPKPLGSTKPAETPKPLGSTKPAETPKPLGNVKPAETPKPLGNIKPTETPKPLGSTKPAETPKPLGSTKPAETPKPLGNVKPAETPKPLGNVKPAETPKPLGNVKPAETPKPVSNAKPAETLKPVGNAKPAETPKPLSNVKPAETPKLVGNAKPAETSKPLDNAKPAEAPKPLGNAKPAEIPKPTGKEELKKEIKNDVNCKKGHAGATDSEKRPESRGTAPTFEEKLQDLHVAEGQKLLLQCRVSSDPPATITWTLNGKTLKTTKFIVLSQEGSLCSVSIEKALPEDRGLYKCVAKNSAGQAESSCQVTVDVPDAPTSENAKAPEMKARRPKSSLPPVLGTESDATVKKKPAPKTPPKAAMPPQIIQFPEDQKVRAGESVELFGKVAGTQPITCTWMKFRKQIQDSEHIKVENSEQGSKLTIRAARQEHCGCYTLLVENKLGSRQAQVNLTVVDKPDPPAGTPCASDIRSSSLTLSWYGSSYDGGSAVQSYSVEIWDSVDKTWKELATCRSTSFNVQDLLPDREYKFRVRAINVYGTSEPSQESELTALGEKPEEEPKDEVEVSDDDEKEPEVDYRTVTVNTEQKVSDFYDIEERLGSGKFGQVFRLVEKKTGKIWAGKFFKAYSAKEKENIRQEISIMNCLHHPKLVQCVDAFEEKANIVMVLEIVSGGELFERIIDEDFELTERECIKYMKQISEGVEYIHKQGIVHLDLKPENIMCVNKTGTRIKLIDFGLARRLENAGSLKVLFGTPEFVAPEVINYEPIGYATDMWSIGVICYILVSGLSPFMGDNDNETLANVTSATWDFDDEAFDEISDDAKDFISNLLKKDMKNRLNCTQCLQHPWLMKDTKNMEAKKLSKDRMKKYMARRKWQKTGNAVRAIGRLSSMAMISGLSGRKSSTGSPTSPLNAEKLESEDVSQAFLEAVAEEKPHVKPYFSKTIRDLEVVEGSAARFDCKIEGYPDPEVVWFKDDQSIRESRHFQIDYDEDGNCSLIISDVCGDDDAKYTCKAVNSLGEATCTAELIVETMEEGEGEGGEEEEEE</sequence>
<name>MYLK_BOVIN</name>
<organism>
    <name type="scientific">Bos taurus</name>
    <name type="common">Bovine</name>
    <dbReference type="NCBI Taxonomy" id="9913"/>
    <lineage>
        <taxon>Eukaryota</taxon>
        <taxon>Metazoa</taxon>
        <taxon>Chordata</taxon>
        <taxon>Craniata</taxon>
        <taxon>Vertebrata</taxon>
        <taxon>Euteleostomi</taxon>
        <taxon>Mammalia</taxon>
        <taxon>Eutheria</taxon>
        <taxon>Laurasiatheria</taxon>
        <taxon>Artiodactyla</taxon>
        <taxon>Ruminantia</taxon>
        <taxon>Pecora</taxon>
        <taxon>Bovidae</taxon>
        <taxon>Bovinae</taxon>
        <taxon>Bos</taxon>
    </lineage>
</organism>